<keyword id="KW-0002">3D-structure</keyword>
<keyword id="KW-0007">Acetylation</keyword>
<keyword id="KW-0010">Activator</keyword>
<keyword id="KW-0013">ADP-ribosylation</keyword>
<keyword id="KW-0112">Calmodulin-binding</keyword>
<keyword id="KW-0160">Chromosomal rearrangement</keyword>
<keyword id="KW-0963">Cytoplasm</keyword>
<keyword id="KW-0221">Differentiation</keyword>
<keyword id="KW-0225">Disease variant</keyword>
<keyword id="KW-0238">DNA-binding</keyword>
<keyword id="KW-0539">Nucleus</keyword>
<keyword id="KW-1185">Reference proteome</keyword>
<keyword id="KW-0678">Repressor</keyword>
<keyword id="KW-0726">Sexual differentiation</keyword>
<keyword id="KW-0804">Transcription</keyword>
<keyword id="KW-0805">Transcription regulation</keyword>
<accession>Q05066</accession>
<comment type="function">
    <text evidence="1 10 11 19 21 26 37 38 44 50 52">Transcriptional regulator that controls a genetic switch in male development (PubMed:11563911). It is necessary and sufficient for initiating male sex determination by directing the development of supporting cell precursors (pre-Sertoli cells) as Sertoli rather than granulosa cells (PubMed:16414182, PubMed:16996051). Involved in different aspects of gene regulation including promoter activation or repression (PubMed:9525897). Binds to the DNA consensus sequence 5'-[AT]AACAA[AT]-3' (PubMed:11563911, PubMed:1425584, PubMed:15170344, PubMed:8159753, PubMed:8265659). SRY HMG box recognizes DNA by partial intercalation in the minor groove and promotes DNA bending (PubMed:11563911, PubMed:1425584, PubMed:15170344, PubMed:16762365, PubMed:8159753, PubMed:8265659). Also involved in pre-mRNA splicing (PubMed:11818535). In male adult brain involved in the maintenance of motor functions of dopaminergic neurons (By similarity).</text>
</comment>
<comment type="subunit">
    <text evidence="15 16 22 23 25 27 41">Interacts with CALM, EP300, HDAC3, KPNB1, ZNF208 isoform KRAB-O, PARP1, SLC9A3R2 and WT1 (PubMed:12871148, PubMed:12970737, PubMed:15297880, PubMed:15469996, PubMed:15746192, PubMed:16904257, PubMed:9054412). The interaction with EP300 modulates its DNA-binding activity. The interaction with KPNB1 is sensitive to dissociation by Ran in the GTP-bound form (PubMed:15297880). Interaction with PARP1 impaired its DNA-binding activity (PubMed:16904257).</text>
</comment>
<comment type="interaction">
    <interactant intactId="EBI-464987">
        <id>Q05066</id>
    </interactant>
    <interactant intactId="EBI-1149760">
        <id>Q15599</id>
        <label>NHERF2</label>
    </interactant>
    <organismsDiffer>false</organismsDiffer>
    <experiments>9</experiments>
</comment>
<comment type="subcellular location">
    <subcellularLocation>
        <location evidence="11">Nucleus speckle</location>
    </subcellularLocation>
    <subcellularLocation>
        <location evidence="22 29">Cytoplasm</location>
    </subcellularLocation>
    <subcellularLocation>
        <location evidence="22 25 26 29 31">Nucleus</location>
    </subcellularLocation>
    <text evidence="2 11 22 25 29">Acetylation contributes to its nuclear localization and deacetylation by HDAC3 induces a cytoplasmic delocalization (PubMed:15297880). Colocalizes with SOX6 in speckles (PubMed:11818535). Colocalizes with CAML in the nucleus (PubMed:15746192). Colocalizes in the nucleus with ZNF208 isoform KRAB-O and tyrosine hydroxylase (TH) (By similarity). Nuclear import is facilitated by XPO4, a protein that usually acts as a nuclear export signal receptor (PubMed:19349578).</text>
</comment>
<comment type="domain">
    <text evidence="19 37 38">DNA binding and bending properties of the HMG domains of human and mouse SRY differ form each other. Human SRY shows more extensive minor groove contacts with DNA and a lower specificity of sequence recognition than mouse SRY.</text>
</comment>
<comment type="PTM">
    <text evidence="44">Phosphorylated on serine residues by PKA. Phosphorylation by PKA enhances its DNA-binding activity and stimulates transcription repression.</text>
</comment>
<comment type="PTM">
    <text evidence="22">Acetylation of Lys-136 contributes to its nuclear localization and enhances its interaction with KPNB1. Deacetylated by HDAC3.</text>
</comment>
<comment type="PTM">
    <text evidence="27">Poly-ADP-ribosylated by PARP1. ADP-ribosylation reduces its DNA-binding activity.</text>
</comment>
<comment type="disease" evidence="6 7 8 9 10 12 14 17 18 20 24 26 28 30 31 32 33 34 35 36 39 40 42 43 46 47 48">
    <disease id="DI-01682">
        <name>46,XY sex reversal 1</name>
        <acronym>SRXY1</acronym>
        <description>A condition characterized by male-to-female sex reversal in the presence of a normal 46,XY karyotype. Patients manifest rapid and early degeneration of their gonads, which are present in the adult as 'streak gonads', consisting mainly of fibrous tissue and variable amounts of ovarian stroma. As a result these patients do not develop secondary sexual characteristics at puberty. The external genitalia in these subjects are completely female, and Muellerian structures are normal.</description>
        <dbReference type="MIM" id="400044"/>
    </disease>
    <text>The disease is caused by variants affecting the gene represented in this entry.</text>
</comment>
<comment type="disease">
    <text evidence="8">A 45,X chromosomal aberration involving SRY is found in Turner syndrome, a disease characterized by gonadal dysgenesis with short stature, 'streak gonads', variable abnormalities such as webbing of the neck, cubitus valgus, cardiac defects, low posterior hair line. The phenotype is female.</text>
</comment>
<comment type="disease" evidence="5 45">
    <disease id="DI-02395">
        <name>46,XX sex reversal 1</name>
        <acronym>SRXX1</acronym>
        <description>A condition in which male gonads develop in a genetic female (female to male sex reversal).</description>
        <dbReference type="MIM" id="400045"/>
    </disease>
    <text>The disease is caused by variants affecting the gene represented in this entry.</text>
</comment>
<comment type="similarity">
    <text evidence="54">Belongs to the SRY family.</text>
</comment>
<comment type="online information" name="Protein Spotlight">
    <link uri="https://www.proteinspotlight.org/back_issues/080"/>
    <text>The tenuous nature of sex - Issue 80 of March 2007</text>
</comment>
<comment type="online information" name="Wikipedia">
    <link uri="https://en.wikipedia.org/wiki/SRY"/>
    <text>SRY entry</text>
</comment>
<sequence>MQSYASAMLSVFNSDDYSPAVQENIPALRRSSSFLCTESCNSKYQCETGENSKGNVQDRVKRPMNAFIVWSRDQRRKMALENPRMRNSEISKQLGYQWKMLTEAEKWPFFQEAQKLQAMHREKYPNYKYRPRRKAKMLPKNCSLLPADPASVLCSEVQLDNRLYRDDCTKATHSRMEHQLGHLPPINAASSPQQRDRYSHWTKL</sequence>
<name>SRY_HUMAN</name>
<feature type="chain" id="PRO_0000048671" description="Sex-determining region Y protein">
    <location>
        <begin position="1"/>
        <end position="204"/>
    </location>
</feature>
<feature type="DNA-binding region" description="HMG box" evidence="3">
    <location>
        <begin position="60"/>
        <end position="128"/>
    </location>
</feature>
<feature type="region of interest" description="Sufficient for interaction with KPNB1" evidence="22">
    <location>
        <begin position="59"/>
        <end position="136"/>
    </location>
</feature>
<feature type="region of interest" description="Required for nuclear localization" evidence="13 25">
    <location>
        <begin position="61"/>
        <end position="77"/>
    </location>
</feature>
<feature type="region of interest" description="Sufficient for interaction with EP300" evidence="22">
    <location>
        <begin position="107"/>
        <end position="139"/>
    </location>
</feature>
<feature type="region of interest" description="Required for nuclear localization" evidence="22">
    <location>
        <begin position="130"/>
        <end position="136"/>
    </location>
</feature>
<feature type="region of interest" description="Necessary for interaction with ZNF208 isoform KRAB-O" evidence="23">
    <location>
        <begin position="138"/>
        <end position="155"/>
    </location>
</feature>
<feature type="region of interest" description="Disordered" evidence="4">
    <location>
        <begin position="175"/>
        <end position="204"/>
    </location>
</feature>
<feature type="region of interest" description="Necessary for interaction with SLC9A3R2" evidence="41">
    <location>
        <begin position="198"/>
        <end position="204"/>
    </location>
</feature>
<feature type="compositionally biased region" description="Basic and acidic residues" evidence="4">
    <location>
        <begin position="194"/>
        <end position="204"/>
    </location>
</feature>
<feature type="modified residue" description="N6-acetyllysine" evidence="22">
    <location>
        <position position="136"/>
    </location>
</feature>
<feature type="sequence variant" id="VAR_030019" description="In SRXY1." evidence="28">
    <original>S</original>
    <variation>L</variation>
    <location>
        <position position="3"/>
    </location>
</feature>
<feature type="sequence variant" id="VAR_003717" description="In SRXY1; partial; also in two patients with a Turner syndrome phenotype; dbSNP:rs104894971." evidence="8 43">
    <original>S</original>
    <variation>N</variation>
    <location>
        <position position="18"/>
    </location>
</feature>
<feature type="sequence variant" id="VAR_003718" description="In SRXY1; dbSNP:rs764249635." evidence="33">
    <original>V</original>
    <variation>A</variation>
    <location>
        <position position="60"/>
    </location>
</feature>
<feature type="sequence variant" id="VAR_003719" description="In SRXY1; dbSNP:rs104894957." evidence="24 30">
    <original>V</original>
    <variation>L</variation>
    <location>
        <position position="60"/>
    </location>
</feature>
<feature type="sequence variant" id="VAR_003720" description="In SRXY1; dbSNP:rs2124486306." evidence="39">
    <original>R</original>
    <variation>G</variation>
    <location>
        <position position="62"/>
    </location>
</feature>
<feature type="sequence variant" id="VAR_003721" description="In SRXY1; alters interaction with DNA and DNA bending; abolishes nuclear localization; dbSNP:rs104894969." evidence="10 26 30">
    <original>M</original>
    <variation>I</variation>
    <location>
        <position position="64"/>
    </location>
</feature>
<feature type="sequence variant" id="VAR_017298" description="In SRXY1." evidence="46">
    <original>M</original>
    <variation>R</variation>
    <location>
        <position position="64"/>
    </location>
</feature>
<feature type="sequence variant" id="VAR_017299" description="In SRXY1." evidence="46">
    <original>F</original>
    <variation>V</variation>
    <location>
        <position position="67"/>
    </location>
</feature>
<feature type="sequence variant" id="VAR_003722" description="In SRXY1; dbSNP:rs104894968." evidence="34">
    <original>I</original>
    <variation>T</variation>
    <location>
        <position position="68"/>
    </location>
</feature>
<feature type="sequence variant" id="VAR_078433" description="In SRXY1; localizes mainly in the cytoplasm." evidence="31">
    <original>R</original>
    <variation>M</variation>
    <location>
        <position position="75"/>
    </location>
</feature>
<feature type="sequence variant" id="VAR_017300" description="In SRXY1." evidence="6">
    <original>R</original>
    <variation>S</variation>
    <location>
        <position position="76"/>
    </location>
</feature>
<feature type="sequence variant" id="VAR_003723" description="In SRXY1." evidence="39">
    <original>M</original>
    <variation>T</variation>
    <location>
        <position position="78"/>
    </location>
</feature>
<feature type="sequence variant" id="VAR_017301" description="In SRXY1." evidence="7">
    <original>N</original>
    <variation>Y</variation>
    <location>
        <position position="87"/>
    </location>
</feature>
<feature type="sequence variant" id="VAR_003724" description="In SRXY1; dbSNP:rs104894959." evidence="14 18 42">
    <original>I</original>
    <variation>M</variation>
    <location>
        <position position="90"/>
    </location>
</feature>
<feature type="sequence variant" id="VAR_003725" description="In SRXY1." evidence="32">
    <original>S</original>
    <variation>G</variation>
    <location>
        <position position="91"/>
    </location>
</feature>
<feature type="sequence variant" id="VAR_017302" description="In SRXY1; dbSNP:rs104894972." evidence="9">
    <original>G</original>
    <variation>E</variation>
    <location>
        <position position="95"/>
    </location>
</feature>
<feature type="sequence variant" id="VAR_003726" description="In SRXY1; dbSNP:rs104894974." evidence="17">
    <original>G</original>
    <variation>R</variation>
    <location>
        <position position="95"/>
    </location>
</feature>
<feature type="sequence variant" id="VAR_003727" description="In SRXY1." evidence="40">
    <original>L</original>
    <variation>H</variation>
    <location>
        <position position="101"/>
    </location>
</feature>
<feature type="sequence variant" id="VAR_003728" description="In SRXY1; dbSNP:rs104894964." evidence="18">
    <original>K</original>
    <variation>I</variation>
    <location>
        <position position="106"/>
    </location>
</feature>
<feature type="sequence variant" id="VAR_003729" description="In SRXY1." evidence="48">
    <original>P</original>
    <variation>R</variation>
    <location>
        <position position="108"/>
    </location>
</feature>
<feature type="sequence variant" id="VAR_003730" description="In SRXY1; dbSNP:rs104894956." evidence="20">
    <original>F</original>
    <variation>S</variation>
    <location>
        <position position="109"/>
    </location>
</feature>
<feature type="sequence variant" id="VAR_003731" description="In SRXY1; dbSNP:rs104894966." evidence="36">
    <original>A</original>
    <variation>T</variation>
    <location>
        <position position="113"/>
    </location>
</feature>
<feature type="sequence variant" id="VAR_003732" description="In SRXY1." evidence="32">
    <original>P</original>
    <variation>L</variation>
    <location>
        <position position="125"/>
    </location>
</feature>
<feature type="sequence variant" id="VAR_003733" description="In SRXY1; dbSNP:rs104894973." evidence="35">
    <original>Y</original>
    <variation>C</variation>
    <location>
        <position position="127"/>
    </location>
</feature>
<feature type="sequence variant" id="VAR_017303" description="In SRXY1; dbSNP:rs104894973." evidence="12">
    <original>Y</original>
    <variation>F</variation>
    <location>
        <position position="127"/>
    </location>
</feature>
<feature type="sequence variant" id="VAR_017304" description="In SRXY1." evidence="47">
    <original>P</original>
    <variation>R</variation>
    <location>
        <position position="131"/>
    </location>
</feature>
<feature type="sequence variant" id="VAR_003734" description="In SRXY1; dbSNP:rs104894976." evidence="39">
    <original>R</original>
    <variation>W</variation>
    <location>
        <position position="133"/>
    </location>
</feature>
<feature type="mutagenesis site" description="Abolishes its phosphorylation by PKA. Does not enhance its DNA-binding activity. Abolishes stimulation of transcription repression." evidence="44">
    <original>SSS</original>
    <variation>AAA</variation>
    <location>
        <begin position="31"/>
        <end position="33"/>
    </location>
</feature>
<feature type="mutagenesis site" description="Strongly reduces nuclear localization. Strongly reduces nuclear localization; when associated with W-133. Reduces interaction with KPNB1." evidence="13 29">
    <original>R</original>
    <variation>G</variation>
    <location>
        <position position="62"/>
    </location>
</feature>
<feature type="mutagenesis site" description="Strongly reduces nuclear localization. Abolishes DNA-binding. Does not reduce interaction with KPNB1 and CAML." evidence="13 25 29">
    <original>R</original>
    <variation>N</variation>
    <location>
        <position position="75"/>
    </location>
</feature>
<feature type="mutagenesis site" description="Reduces nuclear localization. Reduces DNA-binding. Does not reduce interaction with KPNB1 and CAML. Does not affectnuclear import." evidence="13 25 29">
    <original>R</original>
    <variation>P</variation>
    <location>
        <position position="76"/>
    </location>
</feature>
<feature type="mutagenesis site" description="Does not abolish acetylation activity." evidence="22">
    <original>K</original>
    <variation>R</variation>
    <location>
        <position position="115"/>
    </location>
</feature>
<feature type="mutagenesis site" description="Does not abolish acetylation." evidence="22">
    <original>K</original>
    <variation>R</variation>
    <location>
        <position position="123"/>
    </location>
</feature>
<feature type="mutagenesis site" description="Does not abolish acetylation." evidence="22">
    <original>K</original>
    <variation>R</variation>
    <location>
        <position position="128"/>
    </location>
</feature>
<feature type="mutagenesis site" description="Reduces nuclear localization. Strongly reduces nuclear localization; when associated with G-62. Reduces interaction with KPNB1. Does not reduce interaction with CAML. Does not abolish DNA-binding." evidence="13 25 29">
    <original>R</original>
    <variation>W</variation>
    <location>
        <position position="133"/>
    </location>
</feature>
<feature type="mutagenesis site" description="Does not abolish acetylation." evidence="22">
    <original>K</original>
    <variation>R</variation>
    <location>
        <position position="134"/>
    </location>
</feature>
<feature type="mutagenesis site" description="Abolishes acetylation. Does not abolish interaction with EP300. Does not abolish DNA-binding. Enhances cytoplasmic localization. Abolishes interaction with KPNB1." evidence="22">
    <original>K</original>
    <variation>R</variation>
    <location>
        <position position="136"/>
    </location>
</feature>
<feature type="helix" evidence="57">
    <location>
        <begin position="66"/>
        <end position="81"/>
    </location>
</feature>
<feature type="helix" evidence="57">
    <location>
        <begin position="87"/>
        <end position="100"/>
    </location>
</feature>
<feature type="helix" evidence="57">
    <location>
        <begin position="103"/>
        <end position="123"/>
    </location>
</feature>
<feature type="strand" evidence="56">
    <location>
        <begin position="124"/>
        <end position="126"/>
    </location>
</feature>
<evidence type="ECO:0000250" key="1">
    <source>
        <dbReference type="UniProtKB" id="P36394"/>
    </source>
</evidence>
<evidence type="ECO:0000250" key="2">
    <source>
        <dbReference type="UniProtKB" id="Q05738"/>
    </source>
</evidence>
<evidence type="ECO:0000255" key="3">
    <source>
        <dbReference type="PROSITE-ProRule" id="PRU00267"/>
    </source>
</evidence>
<evidence type="ECO:0000256" key="4">
    <source>
        <dbReference type="SAM" id="MobiDB-lite"/>
    </source>
</evidence>
<evidence type="ECO:0000269" key="5">
    <source>
    </source>
</evidence>
<evidence type="ECO:0000269" key="6">
    <source>
    </source>
</evidence>
<evidence type="ECO:0000269" key="7">
    <source>
    </source>
</evidence>
<evidence type="ECO:0000269" key="8">
    <source>
    </source>
</evidence>
<evidence type="ECO:0000269" key="9">
    <source>
    </source>
</evidence>
<evidence type="ECO:0000269" key="10">
    <source>
    </source>
</evidence>
<evidence type="ECO:0000269" key="11">
    <source>
    </source>
</evidence>
<evidence type="ECO:0000269" key="12">
    <source>
    </source>
</evidence>
<evidence type="ECO:0000269" key="13">
    <source>
    </source>
</evidence>
<evidence type="ECO:0000269" key="14">
    <source>
    </source>
</evidence>
<evidence type="ECO:0000269" key="15">
    <source>
    </source>
</evidence>
<evidence type="ECO:0000269" key="16">
    <source>
    </source>
</evidence>
<evidence type="ECO:0000269" key="17">
    <source>
    </source>
</evidence>
<evidence type="ECO:0000269" key="18">
    <source>
    </source>
</evidence>
<evidence type="ECO:0000269" key="19">
    <source>
    </source>
</evidence>
<evidence type="ECO:0000269" key="20">
    <source>
    </source>
</evidence>
<evidence type="ECO:0000269" key="21">
    <source>
    </source>
</evidence>
<evidence type="ECO:0000269" key="22">
    <source>
    </source>
</evidence>
<evidence type="ECO:0000269" key="23">
    <source>
    </source>
</evidence>
<evidence type="ECO:0000269" key="24">
    <source>
    </source>
</evidence>
<evidence type="ECO:0000269" key="25">
    <source>
    </source>
</evidence>
<evidence type="ECO:0000269" key="26">
    <source>
    </source>
</evidence>
<evidence type="ECO:0000269" key="27">
    <source>
    </source>
</evidence>
<evidence type="ECO:0000269" key="28">
    <source>
    </source>
</evidence>
<evidence type="ECO:0000269" key="29">
    <source>
    </source>
</evidence>
<evidence type="ECO:0000269" key="30">
    <source>
    </source>
</evidence>
<evidence type="ECO:0000269" key="31">
    <source>
    </source>
</evidence>
<evidence type="ECO:0000269" key="32">
    <source>
    </source>
</evidence>
<evidence type="ECO:0000269" key="33">
    <source>
    </source>
</evidence>
<evidence type="ECO:0000269" key="34">
    <source>
    </source>
</evidence>
<evidence type="ECO:0000269" key="35">
    <source>
    </source>
</evidence>
<evidence type="ECO:0000269" key="36">
    <source>
    </source>
</evidence>
<evidence type="ECO:0000269" key="37">
    <source>
    </source>
</evidence>
<evidence type="ECO:0000269" key="38">
    <source>
    </source>
</evidence>
<evidence type="ECO:0000269" key="39">
    <source>
    </source>
</evidence>
<evidence type="ECO:0000269" key="40">
    <source>
    </source>
</evidence>
<evidence type="ECO:0000269" key="41">
    <source>
    </source>
</evidence>
<evidence type="ECO:0000269" key="42">
    <source>
    </source>
</evidence>
<evidence type="ECO:0000269" key="43">
    <source>
    </source>
</evidence>
<evidence type="ECO:0000269" key="44">
    <source>
    </source>
</evidence>
<evidence type="ECO:0000269" key="45">
    <source>
    </source>
</evidence>
<evidence type="ECO:0000269" key="46">
    <source>
    </source>
</evidence>
<evidence type="ECO:0000269" key="47">
    <source ref="42"/>
</evidence>
<evidence type="ECO:0000269" key="48">
    <source ref="48"/>
</evidence>
<evidence type="ECO:0000303" key="49">
    <source>
    </source>
</evidence>
<evidence type="ECO:0000303" key="50">
    <source>
    </source>
</evidence>
<evidence type="ECO:0000303" key="51">
    <source>
    </source>
</evidence>
<evidence type="ECO:0000303" key="52">
    <source>
    </source>
</evidence>
<evidence type="ECO:0000303" key="53">
    <source>
    </source>
</evidence>
<evidence type="ECO:0000305" key="54"/>
<evidence type="ECO:0000312" key="55">
    <source>
        <dbReference type="HGNC" id="HGNC:11311"/>
    </source>
</evidence>
<evidence type="ECO:0007829" key="56">
    <source>
        <dbReference type="PDB" id="1HRY"/>
    </source>
</evidence>
<evidence type="ECO:0007829" key="57">
    <source>
        <dbReference type="PDB" id="9BVD"/>
    </source>
</evidence>
<reference key="1">
    <citation type="journal article" date="1990" name="Nature">
        <title>A gene from the human sex-determining region encodes a protein with homology to a conserved DNA-binding motif.</title>
        <authorList>
            <person name="Sinclair A.H."/>
            <person name="Berta P."/>
            <person name="Palmer M.S."/>
            <person name="Hawkins J.R."/>
            <person name="Griffiths B.L."/>
            <person name="Smith M.J."/>
            <person name="Foster J.W."/>
            <person name="Frischauf A.-M."/>
            <person name="Lovell-Badge R."/>
            <person name="Goodfellow P.N."/>
        </authorList>
    </citation>
    <scope>NUCLEOTIDE SEQUENCE [GENOMIC DNA]</scope>
</reference>
<reference key="2">
    <citation type="journal article" date="1993" name="Am. J. Hum. Genet.">
        <title>Identification of the transcriptional unit, structural organization, and promoter sequence of the human sex-determining region Y (SRY) gene, using a reverse genetic approach.</title>
        <authorList>
            <person name="Su H."/>
            <person name="Lau Y.-F.C."/>
        </authorList>
    </citation>
    <scope>NUCLEOTIDE SEQUENCE [GENOMIC DNA / MRNA]</scope>
</reference>
<reference key="3">
    <citation type="journal article" date="1993" name="Genomics">
        <title>Evidence that the SRY protein is encoded by a single exon on the human Y chromosome.</title>
        <authorList>
            <person name="Behlke M.A."/>
            <person name="Bogan J.S."/>
            <person name="Beer-Romero P."/>
            <person name="Page D.C."/>
        </authorList>
    </citation>
    <scope>NUCLEOTIDE SEQUENCE [GENOMIC DNA]</scope>
</reference>
<reference key="4">
    <citation type="journal article" date="1995" name="Genomics">
        <title>41 kilobases of analyzed sequence from the pseudoautosomal and sex-determining regions of the short arm of the human Y chromosome.</title>
        <authorList>
            <person name="Whitfield L.S."/>
            <person name="Hawkins J.R."/>
            <person name="Goodfellow P.N."/>
            <person name="Sulston J."/>
        </authorList>
    </citation>
    <scope>NUCLEOTIDE SEQUENCE [GENOMIC DNA]</scope>
</reference>
<reference key="5">
    <citation type="journal article" date="2004" name="Genome Res.">
        <title>The status, quality, and expansion of the NIH full-length cDNA project: the Mammalian Gene Collection (MGC).</title>
        <authorList>
            <consortium name="The MGC Project Team"/>
        </authorList>
    </citation>
    <scope>NUCLEOTIDE SEQUENCE [LARGE SCALE MRNA]</scope>
</reference>
<reference key="6">
    <citation type="journal article" date="1992" name="EMBO J.">
        <title>SRY, like HMG1, recognizes sharp angles in DNA.</title>
        <authorList>
            <person name="Ferrari S."/>
            <person name="Harley V.R."/>
            <person name="Pontiggia A."/>
            <person name="Goodfellow P.N."/>
            <person name="Lovell-Badge R."/>
            <person name="Bianchi M.E."/>
        </authorList>
    </citation>
    <scope>FUNCTION</scope>
    <scope>CHARACTERIZATION OF DNA-BINDING</scope>
</reference>
<reference key="7">
    <citation type="journal article" date="1993" name="Proc. Natl. Acad. Sci. U.S.A.">
        <title>The SRY high-mobility-group box recognizes DNA by partial intercalation in the minor groove: a topological mechanism of sequence specificity.</title>
        <authorList>
            <person name="King C.Y."/>
            <person name="Weiss M.A."/>
        </authorList>
    </citation>
    <scope>FUNCTION</scope>
    <scope>CHARACTERIZATION OF DNA-BINDING</scope>
</reference>
<reference key="8">
    <citation type="journal article" date="1994" name="Proc. Natl. Acad. Sci. U.S.A.">
        <title>Distinct DNA-binding properties of the high mobility group domain of murine and human SRY sex-determining factors.</title>
        <authorList>
            <person name="Giese K."/>
            <person name="Pagel J."/>
            <person name="Grosschedl R."/>
        </authorList>
    </citation>
    <scope>FUNCTION</scope>
    <scope>CHARACTERIZATION OF DNA-BINDING</scope>
</reference>
<reference key="9">
    <citation type="journal article" date="1997" name="J. Biol. Chem.">
        <title>The human testis determining factor SRY binds a nuclear factor containing PDZ protein interaction domains.</title>
        <authorList>
            <person name="Poulat F."/>
            <person name="de Santa Barbara P."/>
            <person name="Desclozeaux M."/>
            <person name="Soullier S."/>
            <person name="Moniot B."/>
            <person name="Bonneaud N."/>
            <person name="Boizet B."/>
            <person name="Berta P."/>
        </authorList>
    </citation>
    <scope>INTERACTION WITH SLC9A3R2</scope>
</reference>
<reference key="10">
    <citation type="journal article" date="1998" name="J. Biol. Chem.">
        <title>Phosphorylation of an N-terminal motif enhances DNA-binding activity of the human SRY protein.</title>
        <authorList>
            <person name="Desclozeaux M."/>
            <person name="Poulat F."/>
            <person name="de Santa Barbara P."/>
            <person name="Capony J.-P."/>
            <person name="Turowski P."/>
            <person name="Jay P."/>
            <person name="Mejean C."/>
            <person name="Moniot B."/>
            <person name="Boizet B."/>
            <person name="Berta P."/>
        </authorList>
    </citation>
    <scope>FUNCTION</scope>
    <scope>PHOSPHORYLATION</scope>
    <scope>MUTAGENESIS OF 31-SER--SER-33</scope>
</reference>
<reference key="11">
    <citation type="journal article" date="1998" name="Neurogenetics">
        <title>The Y-chromosomal genes SRY and ZFY are transcribed in adult human brain.</title>
        <authorList>
            <person name="Mayer A."/>
            <person name="Lahr G."/>
            <person name="Swaab D.F."/>
            <person name="Pilgrim C."/>
            <person name="Reisert I."/>
        </authorList>
    </citation>
    <scope>TISSUE SPECIFICITY</scope>
</reference>
<reference key="12">
    <citation type="journal article" date="2002" name="Proc. Natl. Acad. Sci. U.S.A.">
        <title>A direct role of SRY and SOX proteins in pre-mRNA splicing.</title>
        <authorList>
            <person name="Ohe K."/>
            <person name="Lalli E."/>
            <person name="Sassone-Corsi P."/>
        </authorList>
    </citation>
    <scope>FUNCTION</scope>
    <scope>SUBCELLULAR LOCATION</scope>
</reference>
<reference key="13">
    <citation type="journal article" date="2003" name="Oncogene">
        <title>Transcriptional activity of testis-determining factor SRY is modulated by the Wilms' tumor 1 gene product, WT1.</title>
        <authorList>
            <person name="Matsuzawa-Watanabe Y."/>
            <person name="Inoue J."/>
            <person name="Semba K."/>
        </authorList>
    </citation>
    <scope>INTERACTION WITH WT1</scope>
</reference>
<reference key="14">
    <citation type="journal article" date="2003" name="Proc. Natl. Acad. Sci. U.S.A.">
        <title>Defective importin beta recognition and nuclear import of the sex-determining factor SRY are associated with XY sex-reversing mutations.</title>
        <authorList>
            <person name="Harley V.R."/>
            <person name="Layfield S."/>
            <person name="Mitchell C.L."/>
            <person name="Forwood J.K."/>
            <person name="John A.P."/>
            <person name="Briggs L.J."/>
            <person name="McDowall S.G."/>
            <person name="Jans D.A."/>
        </authorList>
    </citation>
    <scope>INTERACTION WITH KPNB1</scope>
    <scope>DNA-BINDING</scope>
    <scope>MUTAGENESIS OF ARG-62; ARG-75; ARG-76 AND ARG-133</scope>
</reference>
<reference key="15">
    <citation type="journal article" date="2003" name="Protein Pept. Lett.">
        <title>Recombinant expression, purification and characterisation of the HMG domain of human SRY.</title>
        <authorList>
            <person name="Kelly S."/>
            <person name="Yotis J."/>
            <person name="Macris M."/>
            <person name="Harley V."/>
        </authorList>
    </citation>
    <scope>INTERACTION WITH CALM</scope>
</reference>
<reference key="16">
    <citation type="journal article" date="2004" name="Biochemistry">
        <title>Sry-directed sex reversal in transgenic mice is robust with respect to enhanced DNA bending: comparison of human and murine HMG boxes.</title>
        <authorList>
            <person name="Phillips N.B."/>
            <person name="Nikolskaya T."/>
            <person name="Jancso-Radek A."/>
            <person name="Ittah V."/>
            <person name="Jiang F."/>
            <person name="Singh R."/>
            <person name="Haas E."/>
            <person name="Weiss M.A."/>
        </authorList>
    </citation>
    <scope>FUNCTION</scope>
    <scope>DNA-BINDING</scope>
</reference>
<reference key="17">
    <citation type="journal article" date="2004" name="EMBO J.">
        <title>Regulation of human SRY subcellular distribution by its acetylation/deacetylation.</title>
        <authorList>
            <person name="Thevenet L."/>
            <person name="Mejean C."/>
            <person name="Moniot B."/>
            <person name="Bonneaud N."/>
            <person name="Galeotti N."/>
            <person name="Aldrian-Herrada G."/>
            <person name="Poulat F."/>
            <person name="Berta P."/>
            <person name="Benkirane M."/>
            <person name="Boizet-Bonhoure B."/>
        </authorList>
    </citation>
    <scope>INTERACTION WITH EP300; HDAC3 AND KPNB1</scope>
    <scope>ACETYLATION AT LYS-136</scope>
    <scope>MUTAGENESIS OF LYS-115; LYS-123; LYS-128; LYS-134 AND LYS-136</scope>
    <scope>SUBCELLULAR LOCATION</scope>
</reference>
<reference key="18">
    <citation type="journal article" date="2005" name="Biol. Reprod.">
        <title>Sry associates with the heterochromatin protein 1 complex by interacting with a KRAB domain protein.</title>
        <authorList>
            <person name="Oh H.J."/>
            <person name="Li Y."/>
            <person name="Lau Y.-F.C."/>
        </authorList>
    </citation>
    <scope>INTERACTION WITH ZNF208 ISOFORM KRAB-O</scope>
</reference>
<reference key="19">
    <citation type="journal article" date="2005" name="Mol. Endocrinol.">
        <title>Defective calmodulin-mediated nuclear transport of the sex-determining region of the Y chromosome (SRY) in XY sex reversal.</title>
        <authorList>
            <person name="Sim H."/>
            <person name="Rimmer K."/>
            <person name="Kelly S."/>
            <person name="Ludbrook L.M."/>
            <person name="Clayton A.H."/>
            <person name="Harley V.R."/>
        </authorList>
    </citation>
    <scope>INTERACTION WITH CALM</scope>
    <scope>MUTAGENESIS OF ARG-75; ARG-76 AND ARG-133</scope>
    <scope>SUBCELLULAR LOCATION</scope>
</reference>
<reference key="20">
    <citation type="journal article" date="2006" name="J. Mol. Biol.">
        <title>SRY-directed DNA bending and human sex reversal: reassessment of a clinical mutation uncovers a global coupling between the HMG box and its tail.</title>
        <authorList>
            <person name="Li B."/>
            <person name="Phillips N.B."/>
            <person name="Jancso-Radek A."/>
            <person name="Ittah V."/>
            <person name="Singh R."/>
            <person name="Jones D.N."/>
            <person name="Haas E."/>
            <person name="Weiss M.A."/>
        </authorList>
    </citation>
    <scope>FUNCTION</scope>
    <scope>SUBCELLULAR LOCATION</scope>
    <scope>CHARACTERIZATION OF VARIANT SRXY1 ILE-64</scope>
</reference>
<reference key="21">
    <citation type="journal article" date="2006" name="Mol. Cell. Endocrinol.">
        <title>The poly(ADP-ribose) polymerase 1 interacts with Sry and modulates its biological functions.</title>
        <authorList>
            <person name="Li Y."/>
            <person name="Oh H.J."/>
            <person name="Lau Y.-F.C."/>
        </authorList>
    </citation>
    <scope>INTERACTION WITH PARP1</scope>
    <scope>ADP-RIBOSYLATION</scope>
</reference>
<reference key="22">
    <citation type="journal article" date="2009" name="J. Cell Biol.">
        <title>Exportin 4 mediates a novel nuclear import pathway for Sox family transcription factors.</title>
        <authorList>
            <person name="Gontan C."/>
            <person name="Guettler T."/>
            <person name="Engelen E."/>
            <person name="Demmers J."/>
            <person name="Fornerod M."/>
            <person name="Grosveld F.G."/>
            <person name="Tibboel D."/>
            <person name="Goerlich D."/>
            <person name="Poot R.A."/>
            <person name="Rottier R.J."/>
        </authorList>
    </citation>
    <scope>SUBCELLULAR LOCATION</scope>
    <scope>MUTAGENESIS OF ARG-62; ARG-75; ARG-76 AND ARG-133</scope>
</reference>
<reference key="23">
    <citation type="journal article" date="2007" name="Dev. Biol.">
        <title>Sry and the hesitant beginnings of male development.</title>
        <authorList>
            <person name="Polanco J.C."/>
            <person name="Koopman P."/>
        </authorList>
    </citation>
    <scope>REVIEW</scope>
</reference>
<reference key="24">
    <citation type="journal article" date="2006" name="Mol. Cell. Endocrinol.">
        <title>KRAB: a partner for SRY action on chromatin.</title>
        <authorList>
            <person name="Oh H.J."/>
            <person name="Lau Y.F."/>
        </authorList>
    </citation>
    <scope>REVIEW</scope>
</reference>
<reference key="25">
    <citation type="journal article" date="1995" name="Cell">
        <title>Molecular basis of human 46X,Y sex reversal revealed from the three-dimensional solution structure of the human SRY-DNA complex.</title>
        <authorList>
            <person name="Werner M.H."/>
            <person name="Huth J.R."/>
            <person name="Gronenborn A.M."/>
            <person name="Clore G.M."/>
        </authorList>
    </citation>
    <scope>STRUCTURE BY NMR OF 56-131 IN COMPLEX WITH DNA</scope>
</reference>
<reference key="26">
    <citation type="journal article" date="2001" name="J. Mol. Biol.">
        <title>Structural basis for SRY-dependent 46-X,Y sex reversal: modulation of DNA bending by a naturally occurring point mutation.</title>
        <authorList>
            <person name="Murphy E.C."/>
            <person name="Zhurkin V.B."/>
            <person name="Louis J.M."/>
            <person name="Cornilescu G."/>
            <person name="Clore G.M."/>
        </authorList>
    </citation>
    <scope>STRUCTURE BY NMR OF 57-218 IN COMPLEX WITH DNA</scope>
    <scope>CHARACTERIZATION OF VARIANT SRXY1 ILE-64</scope>
    <scope>FUNCTION</scope>
</reference>
<reference key="27">
    <citation type="journal article" date="2006" name="J. Mol. Biol.">
        <title>Structure of a complex of tandem HMG boxes and DNA.</title>
        <authorList>
            <person name="Stott K."/>
            <person name="Tang G.S."/>
            <person name="Lee K.B."/>
            <person name="Thomas J.O."/>
        </authorList>
    </citation>
    <scope>STRUCTURE BY NMR OF 56-130 IN COMPLEX WITH DNA</scope>
</reference>
<reference key="28">
    <citation type="journal article" date="1993" name="Hum. Mutat.">
        <title>Mutational analysis of SRY in XY females.</title>
        <authorList>
            <person name="Hawkins J.R."/>
        </authorList>
    </citation>
    <scope>REVIEW ON VARIANTS</scope>
</reference>
<reference key="29">
    <citation type="journal article" date="1997" name="Hum. Mutat.">
        <title>Mutations in SRY and SOX9: testis-determining genes.</title>
        <authorList>
            <person name="Cameron F.J."/>
            <person name="Sinclair A.H."/>
        </authorList>
    </citation>
    <scope>REVIEW ON VARIANTS</scope>
</reference>
<reference key="30">
    <citation type="journal article" date="1990" name="Nature">
        <title>Genetic evidence equating SRY and the testis-determining factor.</title>
        <authorList>
            <person name="Berta P."/>
            <person name="Hawkins J.R."/>
            <person name="Sinclair A.H."/>
            <person name="Taylor A."/>
            <person name="Griffiths B.L."/>
            <person name="Goodfellow P.N."/>
            <person name="Fellous M."/>
        </authorList>
    </citation>
    <scope>VARIANTS SRXY1 LEU-60 AND ILE-64</scope>
</reference>
<reference key="31">
    <citation type="journal article" date="1993" name="Hum. Mol. Genet.">
        <title>Analysis of the SRY gene in 22 sex-reversed XY females identifies four new point mutations in the conserved DNA binding domain.</title>
        <authorList>
            <person name="Affara N.A."/>
            <person name="Chalmers I.J."/>
            <person name="Ferguson-Smith M.A."/>
        </authorList>
    </citation>
    <scope>VARIANTS SRXY1 GLY-62; THR-78 AND TRP-133</scope>
</reference>
<reference key="32">
    <citation type="journal article" date="1992" name="Am. J. Hum. Genet.">
        <title>Familial case with sequence variant in the testis-determining region associated with two sex phenotypes.</title>
        <authorList>
            <person name="Vilain E."/>
            <person name="McElreavey K."/>
            <person name="Jaubert F."/>
            <person name="Raymond J.-P."/>
            <person name="Richaud F."/>
            <person name="Fellous M."/>
        </authorList>
    </citation>
    <scope>VARIANT SRXY1 LEU-60</scope>
</reference>
<reference key="33">
    <citation type="journal article" date="1992" name="Am. J. Hum. Genet.">
        <title>Evidence for increased prevalence of SRY mutations in XY females with complete rather than partial gonadal dysgenesis.</title>
        <authorList>
            <person name="Hawkins J.R."/>
            <person name="Taylor A."/>
            <person name="Goodfellow P.N."/>
            <person name="Migeon C.J."/>
            <person name="Smith K.D."/>
            <person name="Berkovitz G.D."/>
        </authorList>
    </citation>
    <scope>VARIANTS SRXY1 MET-90 AND ILE-106</scope>
</reference>
<reference key="34">
    <citation type="journal article" date="1992" name="Hum. Genet.">
        <title>Mutational analysis of SRY: nonsense and missense mutations in XY sex reversal.</title>
        <authorList>
            <person name="Hawkins J.R."/>
            <person name="Taylor A."/>
            <person name="Berta P."/>
            <person name="Levilliers J."/>
            <person name="van der Auwera B."/>
            <person name="Goodfellow P.N."/>
        </authorList>
    </citation>
    <scope>VARIANT SRXY1 ARG-95</scope>
</reference>
<reference key="35">
    <citation type="journal article" date="1993" name="Am. J. Hum. Genet.">
        <title>True hermaphroditism in a 46,XY individual, caused by a postzygotic somatic point mutation in the male gonadal sex-determining locus (SRY): molecular genetics and histological findings in a sporadic case.</title>
        <authorList>
            <person name="Braun A."/>
            <person name="Kammerer S."/>
            <person name="Cleve H."/>
            <person name="Loehrs U."/>
            <person name="Schwarz H.-P."/>
            <person name="Kuhnle U."/>
        </authorList>
    </citation>
    <scope>VARIANT SRXY1 HIS-101</scope>
</reference>
<reference key="36">
    <citation type="journal article" date="1992" name="Hum. Genet.">
        <title>A familial mutation in the testis-determining gene SRY shared by both sexes.</title>
        <authorList>
            <person name="Jaeger R.J."/>
            <person name="Harley V.R."/>
            <person name="Pfeiffer R.A."/>
            <person name="Goodfellow P.N."/>
            <person name="Scherer G."/>
        </authorList>
    </citation>
    <scope>VARIANT SRXY1 SER-109</scope>
</reference>
<reference key="37">
    <citation type="journal article" date="1993" name="J. Med. Genet.">
        <title>A new de novo mutation (A113T) in HMG box of the SRY gene leads to XY gonadal dysgenesis.</title>
        <authorList>
            <person name="Zeng Y."/>
            <person name="Ren Z."/>
            <person name="Zhang M."/>
            <person name="Huang Y."/>
            <person name="Zeng F."/>
            <person name="Huang S."/>
        </authorList>
    </citation>
    <scope>VARIANT SRXY1 THR-113</scope>
</reference>
<reference key="38">
    <citation type="journal article" date="1994" name="Hum. Mutat.">
        <title>Description and functional implications of a novel mutation in the sex-determining gene SRY.</title>
        <authorList>
            <person name="Poulat F."/>
            <person name="Soulier S."/>
            <person name="Goze C."/>
            <person name="Heitz F."/>
            <person name="Calas B."/>
            <person name="Berta P."/>
        </authorList>
    </citation>
    <scope>VARIANT SRXY1 CYS-127</scope>
</reference>
<reference key="39">
    <citation type="journal article" date="1994" name="Science">
        <title>Molecular basis of mammalian sexual determination: activation of Mullerian inhibiting substance gene expression by SRY.</title>
        <authorList>
            <person name="Haqq C.M."/>
            <person name="King C.Y."/>
            <person name="Ukiyama E."/>
            <person name="Falsafi S."/>
            <person name="Haqq T.N."/>
            <person name="Donahoe P.K."/>
            <person name="Weiss M.A."/>
        </authorList>
    </citation>
    <scope>VARIANT SRXY1 THR-68</scope>
</reference>
<reference key="40">
    <citation type="journal article" date="1995" name="Am. J. Hum. Genet.">
        <title>Two novel SRY missense mutations reducing DNA binding identified in XY females and their mosaic fathers.</title>
        <authorList>
            <person name="Schmitt-Ney M."/>
            <person name="Thiele H."/>
            <person name="Kaltwasser P."/>
            <person name="Bardoni B."/>
            <person name="Cisternino M."/>
            <person name="Scherer G."/>
        </authorList>
    </citation>
    <scope>VARIANTS SRXY1 GLY-91 AND LEU-125</scope>
</reference>
<reference key="41">
    <citation type="journal article" date="1995" name="J. Pediatr.">
        <title>True hermaphroditism with 46,XY karyotype and a point mutation in the SRY gene.</title>
        <authorList>
            <person name="Hiort O."/>
            <person name="Klaubert G.T."/>
        </authorList>
    </citation>
    <scope>VARIANT SRXY1 ALA-60</scope>
</reference>
<reference key="42">
    <citation type="journal article" date="1998" name="Hum. Mutat. Suppl.">
        <title>Novel missense mutation (P131R) in the HMG box of SRY in XY sex reversal.</title>
        <authorList>
            <person name="Lundberg Y."/>
            <person name="Ritzen M."/>
            <person name="Harlin J."/>
            <person name="Wedell A."/>
        </authorList>
    </citation>
    <scope>VARIANT SRXY1 ARG-131</scope>
</reference>
<reference key="43">
    <citation type="journal article" date="1998" name="Cytogenet. Cell Genet.">
        <title>Three novel SRY mutations in XY gonadal dysgenesis and the enigma of XY gonadal dysgenesis cases without SRY mutations.</title>
        <authorList>
            <person name="Scherer G."/>
            <person name="Held M."/>
            <person name="Erdel M."/>
            <person name="Meschede D."/>
            <person name="Horst J."/>
            <person name="Lesniewicz R."/>
            <person name="Midro A.T."/>
        </authorList>
    </citation>
    <scope>VARIANTS SRXY1 ARG-64 AND VAL-67</scope>
</reference>
<reference key="44">
    <citation type="journal article" date="1998" name="Hum. Genet.">
        <title>A novel missense mutation (S18N) in the 5' non-HMG box region of the SRY gene in a patient with partial gonadal dysgenesis and his normal male relatives.</title>
        <authorList>
            <person name="Domenice S."/>
            <person name="Nishi M.Y."/>
            <person name="Billerbeck A.E.C."/>
            <person name="Latronico A.C."/>
            <person name="Medeiros M.A."/>
            <person name="Russell A.J."/>
            <person name="Vass K."/>
            <person name="Carvalho F.M."/>
            <person name="Costa-Frade E.M."/>
            <person name="Arnhold I.J.P."/>
            <person name="Mendonca B.B."/>
        </authorList>
    </citation>
    <scope>VARIANT SRXY1 ASN-18</scope>
</reference>
<reference key="45">
    <citation type="journal article" date="1998" name="Hum. Mutat.">
        <title>Independent observation of SRY mutation I90M in a patient with complete gonadal dysgenesis.</title>
        <authorList>
            <person name="Doerk T."/>
            <person name="Stuhrmann M."/>
            <person name="Miller K."/>
            <person name="Schmidtke J."/>
        </authorList>
    </citation>
    <scope>VARIANT SRXY1 MET-90</scope>
</reference>
<reference key="46">
    <citation type="journal article" date="1998" name="Intern. Med.">
        <title>A rare case of 46,XX true hermaphroditism with hidden mosaicism with sex-determining region Y chromosome-bearing cells in the gonads.</title>
        <authorList>
            <person name="Inoue H."/>
            <person name="Nomura M."/>
            <person name="Yanase T."/>
            <person name="Ichino I."/>
            <person name="Goto K."/>
            <person name="Ikuyama S."/>
            <person name="Takayanagi R."/>
            <person name="Nawata H."/>
        </authorList>
    </citation>
    <scope>INVOLVEMENT IN SRXX1</scope>
</reference>
<reference key="47">
    <citation type="journal article" date="1999" name="Endocr. J.">
        <title>A novel sex-determining region on Y (SRY) missense mutation identified in a 46,XY female and also in the father.</title>
        <authorList>
            <person name="Imai A."/>
            <person name="Takagi A."/>
            <person name="Tamaya T."/>
        </authorList>
    </citation>
    <scope>VARIANT SRXY1 SER-76</scope>
</reference>
<reference key="48">
    <citation type="journal article" date="1999" name="Hum. Mutat.">
        <title>Another mutation within the HMG-box of the SRY gene associated with Swyer syndrome.</title>
        <authorList>
            <person name="Jakubiczka S."/>
            <person name="Bettecken T."/>
            <person name="Stumm M."/>
            <person name="Neulen J."/>
            <person name="Wieacker P."/>
        </authorList>
    </citation>
    <scope>VARIANT SRXY1 ARG-108</scope>
</reference>
<reference key="49">
    <citation type="journal article" date="2000" name="Am. J. Med. Genet.">
        <title>SRY gene transferred to the long arm of the X chromosome in a Y-positive XX true hermaphrodite.</title>
        <authorList>
            <person name="Margarit E."/>
            <person name="Coll M.D."/>
            <person name="Oliva R."/>
            <person name="Gomez D."/>
            <person name="Soler A."/>
            <person name="Ballesta F."/>
        </authorList>
    </citation>
    <scope>INVOLVEMENT IN SRXX1</scope>
</reference>
<reference key="50">
    <citation type="journal article" date="2000" name="J. Clin. Endocrinol. Metab.">
        <title>Identification of a new missense mutation (Gly95Glu) in a highly conserved codon within the high-mobility group box of the sex-determining region Y gene: report on a 46,XY female with gonadal dysgenesis and yolk-sac tumor.</title>
        <authorList>
            <person name="Schaeffler A."/>
            <person name="Barth N."/>
            <person name="Winkler K."/>
            <person name="Zietz B."/>
            <person name="Ruemmele P."/>
            <person name="Knuechel R."/>
            <person name="Schoelmerich J."/>
            <person name="Palitzsch K.-D."/>
        </authorList>
    </citation>
    <scope>VARIANT SRXY1 GLU-95</scope>
</reference>
<reference key="51">
    <citation type="journal article" date="2000" name="J. Clin. Endocrinol. Metab.">
        <title>A mutation in the 5' non-high mobility group box region of the SRY gene in patients with Turner syndrome and Y mosaicism.</title>
        <authorList>
            <person name="Canto P."/>
            <person name="de la Chesnaye E."/>
            <person name="Lopez M."/>
            <person name="Cervantes A."/>
            <person name="Chavez B."/>
            <person name="Vilchis F."/>
            <person name="Reyes E."/>
            <person name="Ulloa-Aguirre A."/>
            <person name="Kofman-Alfaro S."/>
            <person name="Mendez J.P."/>
        </authorList>
    </citation>
    <scope>VARIANT SRXY1 ASN-18</scope>
</reference>
<reference key="52">
    <citation type="journal article" date="2000" name="J. Hum. Genet.">
        <title>A novel missense mutation in the HMG box region of the SRY gene in a Japanese patient with an XY sex reversal.</title>
        <authorList>
            <person name="Okuhara K."/>
            <person name="Tajima T."/>
            <person name="Nakae J."/>
            <person name="Fujieda K."/>
        </authorList>
    </citation>
    <scope>VARIANT SRXY1 TYR-87</scope>
</reference>
<reference key="53">
    <citation type="journal article" date="2002" name="J. Clin. Endocrinol. Metab.">
        <title>Familial mutation in the testis-determining gene SRY shared by an XY female and her normal father.</title>
        <authorList>
            <person name="Jordan B.K."/>
            <person name="Jain M."/>
            <person name="Natarajan S."/>
            <person name="Frasier S.D."/>
            <person name="Vilain E."/>
        </authorList>
    </citation>
    <scope>VARIANT SRXY1 PHE-127</scope>
</reference>
<reference key="54">
    <citation type="journal article" date="2003" name="J. Pediatr. Endocrinol. Metab.">
        <title>True hermaphroditism in an XY individual due to a familial point mutation of the SRY gene.</title>
        <authorList>
            <person name="Maier E.M."/>
            <person name="Leitner C."/>
            <person name="Lohrs U."/>
            <person name="Kuhnle U."/>
        </authorList>
    </citation>
    <scope>VARIANT SRXY1 MET-90</scope>
</reference>
<reference key="55">
    <citation type="journal article" date="2007" name="Eur. J. Hum. Genet.">
        <title>Identification and molecular modelling of a novel familial mutation in the SRY gene implicated in the pure gonadal dysgenesis.</title>
        <authorList>
            <person name="Gimelli G."/>
            <person name="Gimelli S."/>
            <person name="Dimasi N."/>
            <person name="Bocciardi R."/>
            <person name="Battista E.D."/>
            <person name="Pramparo T."/>
            <person name="Zuffardi O."/>
        </authorList>
    </citation>
    <scope>VARIANT SRXY1 LEU-3</scope>
</reference>
<reference key="56">
    <citation type="journal article" date="2016" name="PLoS ONE">
        <title>A novel missense mutation 224G&gt;T (R75M) in SRY coding region interferes with nuclear import and results in 46, XY complete gonadal dysgenesis.</title>
        <authorList>
            <person name="Fan W."/>
            <person name="Wang B."/>
            <person name="He S."/>
            <person name="Zhang T."/>
            <person name="Yin C."/>
            <person name="Chen Y."/>
            <person name="Zheng S."/>
            <person name="Zhang J."/>
            <person name="Li L."/>
        </authorList>
    </citation>
    <scope>INVOLVEMENT IN SRXY1</scope>
    <scope>VARIANT SRXY1 MET-75</scope>
    <scope>CHARACTERIZATION OF VARIANT SRXY1 MET-75</scope>
    <scope>SUBCELLULAR LOCATION</scope>
</reference>
<organism>
    <name type="scientific">Homo sapiens</name>
    <name type="common">Human</name>
    <dbReference type="NCBI Taxonomy" id="9606"/>
    <lineage>
        <taxon>Eukaryota</taxon>
        <taxon>Metazoa</taxon>
        <taxon>Chordata</taxon>
        <taxon>Craniata</taxon>
        <taxon>Vertebrata</taxon>
        <taxon>Euteleostomi</taxon>
        <taxon>Mammalia</taxon>
        <taxon>Eutheria</taxon>
        <taxon>Euarchontoglires</taxon>
        <taxon>Primates</taxon>
        <taxon>Haplorrhini</taxon>
        <taxon>Catarrhini</taxon>
        <taxon>Hominidae</taxon>
        <taxon>Homo</taxon>
    </lineage>
</organism>
<proteinExistence type="evidence at protein level"/>
<gene>
    <name evidence="51 55" type="primary">SRY</name>
    <name evidence="49 51 53" type="synonym">TDF</name>
</gene>
<protein>
    <recommendedName>
        <fullName evidence="51">Sex-determining region Y protein</fullName>
    </recommendedName>
    <alternativeName>
        <fullName evidence="49 51 53">Testis-determining factor</fullName>
    </alternativeName>
</protein>
<dbReference type="EMBL" id="X53772">
    <property type="protein sequence ID" value="CAA37790.1"/>
    <property type="molecule type" value="Genomic_DNA"/>
</dbReference>
<dbReference type="EMBL" id="L10101">
    <property type="protein sequence ID" value="AAA60590.1"/>
    <property type="molecule type" value="mRNA"/>
</dbReference>
<dbReference type="EMBL" id="L10102">
    <property type="protein sequence ID" value="AAA60591.1"/>
    <property type="molecule type" value="Genomic_DNA"/>
</dbReference>
<dbReference type="EMBL" id="L08063">
    <property type="protein sequence ID" value="AAA16878.1"/>
    <property type="molecule type" value="Genomic_DNA"/>
</dbReference>
<dbReference type="EMBL" id="X96421">
    <property type="protein sequence ID" value="CAA65281.1"/>
    <property type="molecule type" value="Genomic_DNA"/>
</dbReference>
<dbReference type="EMBL" id="S53156">
    <property type="protein sequence ID" value="AAB25008.1"/>
    <property type="molecule type" value="mRNA"/>
</dbReference>
<dbReference type="EMBL" id="S56543">
    <property type="protein sequence ID" value="AAB25716.1"/>
    <property type="molecule type" value="mRNA"/>
</dbReference>
<dbReference type="EMBL" id="BC074923">
    <property type="protein sequence ID" value="AAH74923.1"/>
    <property type="molecule type" value="mRNA"/>
</dbReference>
<dbReference type="EMBL" id="BC074924">
    <property type="protein sequence ID" value="AAH74924.1"/>
    <property type="molecule type" value="mRNA"/>
</dbReference>
<dbReference type="CCDS" id="CCDS14772.1"/>
<dbReference type="PIR" id="A47533">
    <property type="entry name" value="A47533"/>
</dbReference>
<dbReference type="RefSeq" id="NP_003131.1">
    <property type="nucleotide sequence ID" value="NM_003140.3"/>
</dbReference>
<dbReference type="PDB" id="1HRY">
    <property type="method" value="NMR"/>
    <property type="chains" value="A=56-131"/>
</dbReference>
<dbReference type="PDB" id="1HRZ">
    <property type="method" value="NMR"/>
    <property type="chains" value="A=56-131"/>
</dbReference>
<dbReference type="PDB" id="1J46">
    <property type="method" value="NMR"/>
    <property type="chains" value="A=57-140"/>
</dbReference>
<dbReference type="PDB" id="1J47">
    <property type="method" value="NMR"/>
    <property type="chains" value="A=57-140"/>
</dbReference>
<dbReference type="PDB" id="2GZK">
    <property type="method" value="NMR"/>
    <property type="chains" value="A=56-130"/>
</dbReference>
<dbReference type="PDB" id="6EDB">
    <property type="method" value="X-ray"/>
    <property type="resolution" value="3.21 A"/>
    <property type="chains" value="A/B=56-130"/>
</dbReference>
<dbReference type="PDB" id="7YHO">
    <property type="method" value="EM"/>
    <property type="resolution" value="3.30 A"/>
    <property type="chains" value="A=56-130"/>
</dbReference>
<dbReference type="PDB" id="7YHP">
    <property type="method" value="EM"/>
    <property type="resolution" value="3.10 A"/>
    <property type="chains" value="A=56-130"/>
</dbReference>
<dbReference type="PDB" id="7YHQ">
    <property type="method" value="EM"/>
    <property type="resolution" value="3.90 A"/>
    <property type="chains" value="A=56-130"/>
</dbReference>
<dbReference type="PDB" id="9BVD">
    <property type="method" value="X-ray"/>
    <property type="resolution" value="2.48 A"/>
    <property type="chains" value="C/F/I=59-136"/>
</dbReference>
<dbReference type="PDBsum" id="1HRY"/>
<dbReference type="PDBsum" id="1HRZ"/>
<dbReference type="PDBsum" id="1J46"/>
<dbReference type="PDBsum" id="1J47"/>
<dbReference type="PDBsum" id="2GZK"/>
<dbReference type="PDBsum" id="6EDB"/>
<dbReference type="PDBsum" id="7YHO"/>
<dbReference type="PDBsum" id="7YHP"/>
<dbReference type="PDBsum" id="7YHQ"/>
<dbReference type="PDBsum" id="9BVD"/>
<dbReference type="SMR" id="Q05066"/>
<dbReference type="BioGRID" id="112614">
    <property type="interactions" value="25"/>
</dbReference>
<dbReference type="CORUM" id="Q05066"/>
<dbReference type="FunCoup" id="Q05066">
    <property type="interactions" value="12"/>
</dbReference>
<dbReference type="IntAct" id="Q05066">
    <property type="interactions" value="3"/>
</dbReference>
<dbReference type="MINT" id="Q05066"/>
<dbReference type="STRING" id="9606.ENSP00000372547"/>
<dbReference type="iPTMnet" id="Q05066"/>
<dbReference type="PhosphoSitePlus" id="Q05066"/>
<dbReference type="BioMuta" id="SRY"/>
<dbReference type="DMDM" id="548983"/>
<dbReference type="MassIVE" id="Q05066"/>
<dbReference type="PeptideAtlas" id="Q05066"/>
<dbReference type="ABCD" id="Q05066">
    <property type="antibodies" value="2 sequenced antibodies"/>
</dbReference>
<dbReference type="Antibodypedia" id="599">
    <property type="antibodies" value="339 antibodies from 32 providers"/>
</dbReference>
<dbReference type="DNASU" id="6736"/>
<dbReference type="Ensembl" id="ENST00000383070.2">
    <property type="protein sequence ID" value="ENSP00000372547.1"/>
    <property type="gene ID" value="ENSG00000184895.8"/>
</dbReference>
<dbReference type="GeneID" id="6736"/>
<dbReference type="KEGG" id="hsa:6736"/>
<dbReference type="MANE-Select" id="ENST00000383070.2">
    <property type="protein sequence ID" value="ENSP00000372547.1"/>
    <property type="RefSeq nucleotide sequence ID" value="NM_003140.3"/>
    <property type="RefSeq protein sequence ID" value="NP_003131.1"/>
</dbReference>
<dbReference type="UCSC" id="uc004fqg.3">
    <property type="organism name" value="human"/>
</dbReference>
<dbReference type="AGR" id="HGNC:11311"/>
<dbReference type="CTD" id="6736"/>
<dbReference type="DisGeNET" id="6736"/>
<dbReference type="GeneCards" id="SRY"/>
<dbReference type="GeneReviews" id="SRY"/>
<dbReference type="HGNC" id="HGNC:11311">
    <property type="gene designation" value="SRY"/>
</dbReference>
<dbReference type="HPA" id="ENSG00000184895">
    <property type="expression patterns" value="Tissue enhanced (skin, testis)"/>
</dbReference>
<dbReference type="MalaCards" id="SRY"/>
<dbReference type="MIM" id="400044">
    <property type="type" value="phenotype"/>
</dbReference>
<dbReference type="MIM" id="400045">
    <property type="type" value="phenotype"/>
</dbReference>
<dbReference type="MIM" id="480000">
    <property type="type" value="gene"/>
</dbReference>
<dbReference type="neXtProt" id="NX_Q05066"/>
<dbReference type="OpenTargets" id="ENSG00000184895"/>
<dbReference type="Orphanet" id="1772">
    <property type="disease" value="45,X/46,XY mixed gonadal dysgenesis"/>
</dbReference>
<dbReference type="Orphanet" id="2138">
    <property type="disease" value="46,XX ovotesticular difference of sex development"/>
</dbReference>
<dbReference type="Orphanet" id="393">
    <property type="disease" value="46,XX testicular difference of sex development"/>
</dbReference>
<dbReference type="Orphanet" id="242">
    <property type="disease" value="46,XY complete gonadal dysgenesis"/>
</dbReference>
<dbReference type="Orphanet" id="251510">
    <property type="disease" value="46,XY partial gonadal dysgenesis"/>
</dbReference>
<dbReference type="PharmGKB" id="PA36135"/>
<dbReference type="VEuPathDB" id="HostDB:ENSG00000184895"/>
<dbReference type="GeneTree" id="ENSGT00940000165583"/>
<dbReference type="HOGENOM" id="CLU_1209425_0_0_1"/>
<dbReference type="InParanoid" id="Q05066"/>
<dbReference type="OMA" id="DCTKATH"/>
<dbReference type="PAN-GO" id="Q05066">
    <property type="GO annotations" value="7 GO annotations based on evolutionary models"/>
</dbReference>
<dbReference type="PhylomeDB" id="Q05066"/>
<dbReference type="PathwayCommons" id="Q05066"/>
<dbReference type="Reactome" id="R-HSA-3769402">
    <property type="pathway name" value="Deactivation of the beta-catenin transactivating complex"/>
</dbReference>
<dbReference type="Reactome" id="R-HSA-9690406">
    <property type="pathway name" value="Transcriptional regulation of testis differentiation"/>
</dbReference>
<dbReference type="SignaLink" id="Q05066"/>
<dbReference type="SIGNOR" id="Q05066"/>
<dbReference type="BioGRID-ORCS" id="6736">
    <property type="hits" value="7 hits in 784 CRISPR screens"/>
</dbReference>
<dbReference type="CD-CODE" id="804901D1">
    <property type="entry name" value="Nuclear speckle"/>
</dbReference>
<dbReference type="EvolutionaryTrace" id="Q05066"/>
<dbReference type="GeneWiki" id="SRY"/>
<dbReference type="GenomeRNAi" id="6736"/>
<dbReference type="Pharos" id="Q05066">
    <property type="development level" value="Tbio"/>
</dbReference>
<dbReference type="PRO" id="PR:Q05066"/>
<dbReference type="Proteomes" id="UP000005640">
    <property type="component" value="Chromosome Y"/>
</dbReference>
<dbReference type="RNAct" id="Q05066">
    <property type="molecule type" value="protein"/>
</dbReference>
<dbReference type="Bgee" id="ENSG00000184895">
    <property type="expression patterns" value="Expressed in primordial germ cell in gonad and 53 other cell types or tissues"/>
</dbReference>
<dbReference type="ExpressionAtlas" id="Q05066">
    <property type="expression patterns" value="baseline and differential"/>
</dbReference>
<dbReference type="GO" id="GO:0000785">
    <property type="term" value="C:chromatin"/>
    <property type="evidence" value="ECO:0000247"/>
    <property type="project" value="NTNU_SB"/>
</dbReference>
<dbReference type="GO" id="GO:0005737">
    <property type="term" value="C:cytoplasm"/>
    <property type="evidence" value="ECO:0007669"/>
    <property type="project" value="UniProtKB-SubCell"/>
</dbReference>
<dbReference type="GO" id="GO:0016607">
    <property type="term" value="C:nuclear speck"/>
    <property type="evidence" value="ECO:0007669"/>
    <property type="project" value="UniProtKB-SubCell"/>
</dbReference>
<dbReference type="GO" id="GO:0005654">
    <property type="term" value="C:nucleoplasm"/>
    <property type="evidence" value="ECO:0000304"/>
    <property type="project" value="Reactome"/>
</dbReference>
<dbReference type="GO" id="GO:0005634">
    <property type="term" value="C:nucleus"/>
    <property type="evidence" value="ECO:0000314"/>
    <property type="project" value="UniProtKB"/>
</dbReference>
<dbReference type="GO" id="GO:0005516">
    <property type="term" value="F:calmodulin binding"/>
    <property type="evidence" value="ECO:0007669"/>
    <property type="project" value="UniProtKB-KW"/>
</dbReference>
<dbReference type="GO" id="GO:0003677">
    <property type="term" value="F:DNA binding"/>
    <property type="evidence" value="ECO:0000314"/>
    <property type="project" value="UniProtKB"/>
</dbReference>
<dbReference type="GO" id="GO:0001228">
    <property type="term" value="F:DNA-binding transcription activator activity, RNA polymerase II-specific"/>
    <property type="evidence" value="ECO:0000318"/>
    <property type="project" value="GO_Central"/>
</dbReference>
<dbReference type="GO" id="GO:0000981">
    <property type="term" value="F:DNA-binding transcription factor activity, RNA polymerase II-specific"/>
    <property type="evidence" value="ECO:0000314"/>
    <property type="project" value="UniProtKB"/>
</dbReference>
<dbReference type="GO" id="GO:0140297">
    <property type="term" value="F:DNA-binding transcription factor binding"/>
    <property type="evidence" value="ECO:0000353"/>
    <property type="project" value="UniProtKB"/>
</dbReference>
<dbReference type="GO" id="GO:0000978">
    <property type="term" value="F:RNA polymerase II cis-regulatory region sequence-specific DNA binding"/>
    <property type="evidence" value="ECO:0000318"/>
    <property type="project" value="GO_Central"/>
</dbReference>
<dbReference type="GO" id="GO:0030154">
    <property type="term" value="P:cell differentiation"/>
    <property type="evidence" value="ECO:0000318"/>
    <property type="project" value="GO_Central"/>
</dbReference>
<dbReference type="GO" id="GO:0030238">
    <property type="term" value="P:male sex determination"/>
    <property type="evidence" value="ECO:0000318"/>
    <property type="project" value="GO_Central"/>
</dbReference>
<dbReference type="GO" id="GO:0045893">
    <property type="term" value="P:positive regulation of DNA-templated transcription"/>
    <property type="evidence" value="ECO:0000314"/>
    <property type="project" value="UniProtKB"/>
</dbReference>
<dbReference type="GO" id="GO:0010628">
    <property type="term" value="P:positive regulation of gene expression"/>
    <property type="evidence" value="ECO:0000314"/>
    <property type="project" value="UniProtKB"/>
</dbReference>
<dbReference type="GO" id="GO:2000020">
    <property type="term" value="P:positive regulation of male gonad development"/>
    <property type="evidence" value="ECO:0000314"/>
    <property type="project" value="UniProtKB"/>
</dbReference>
<dbReference type="GO" id="GO:0045944">
    <property type="term" value="P:positive regulation of transcription by RNA polymerase II"/>
    <property type="evidence" value="ECO:0000318"/>
    <property type="project" value="GO_Central"/>
</dbReference>
<dbReference type="GO" id="GO:0007548">
    <property type="term" value="P:sex differentiation"/>
    <property type="evidence" value="ECO:0007669"/>
    <property type="project" value="UniProtKB-KW"/>
</dbReference>
<dbReference type="CDD" id="cd22034">
    <property type="entry name" value="HMG-box_SoxA_SRY"/>
    <property type="match status" value="1"/>
</dbReference>
<dbReference type="FunFam" id="1.10.30.10:FF:000002">
    <property type="entry name" value="transcription factor Sox-2"/>
    <property type="match status" value="1"/>
</dbReference>
<dbReference type="Gene3D" id="1.10.30.10">
    <property type="entry name" value="High mobility group box domain"/>
    <property type="match status" value="1"/>
</dbReference>
<dbReference type="IDEAL" id="IID00315"/>
<dbReference type="InterPro" id="IPR009071">
    <property type="entry name" value="HMG_box_dom"/>
</dbReference>
<dbReference type="InterPro" id="IPR036910">
    <property type="entry name" value="HMG_box_dom_sf"/>
</dbReference>
<dbReference type="InterPro" id="IPR017253">
    <property type="entry name" value="SRY"/>
</dbReference>
<dbReference type="InterPro" id="IPR050140">
    <property type="entry name" value="SRY-related_HMG-box_TF-like"/>
</dbReference>
<dbReference type="PANTHER" id="PTHR10270:SF161">
    <property type="entry name" value="SEX-DETERMINING REGION Y PROTEIN"/>
    <property type="match status" value="1"/>
</dbReference>
<dbReference type="PANTHER" id="PTHR10270">
    <property type="entry name" value="SOX TRANSCRIPTION FACTOR"/>
    <property type="match status" value="1"/>
</dbReference>
<dbReference type="Pfam" id="PF00505">
    <property type="entry name" value="HMG_box"/>
    <property type="match status" value="1"/>
</dbReference>
<dbReference type="PIRSF" id="PIRSF037653">
    <property type="entry name" value="SRY"/>
    <property type="match status" value="1"/>
</dbReference>
<dbReference type="SMART" id="SM00398">
    <property type="entry name" value="HMG"/>
    <property type="match status" value="1"/>
</dbReference>
<dbReference type="SUPFAM" id="SSF47095">
    <property type="entry name" value="HMG-box"/>
    <property type="match status" value="1"/>
</dbReference>
<dbReference type="PROSITE" id="PS50118">
    <property type="entry name" value="HMG_BOX_2"/>
    <property type="match status" value="1"/>
</dbReference>